<sequence length="603" mass="64189">MSIRRLPETLVNRIAAGEVVERPAAALKELVENAIDAGATRIAVRIAEGGIARLEVEDDGCGMTAADMVLALERHATSKLPDDAIEAVTTLGFRGEALPSIASVARLTLESRTAGGDGWRRVVDNGAVVAEGPAALGQGTRVIVEHLFARVPARRKFLRSARSEYAACLDVVRRLAMARPDVGFTLEHDGRRVLDVQGGQDRVGRVAALTSRDLAANSIGVDLDRGEVHLGGVISLPTYNRGIADHQYLFVNGRPVKDRLLVGALRGAYADLLARDRHPVVALFLDVPTGEVDVNVHPAKTEVRFRDPQLIRGMIVGGLRRALDEHGFRSVQKPAEAALAAWQQEPVAPPPATGFLFDRRAGAAVHPFAAEVSLPAADVARVYDRLMPFTAPAPLAGRAEVAATPPPAAEAHPLGIARGQIAKTYIVAEAEDGLVIVDQHAAHERLVLETLKRGMAGQAVPSQGLLIPEVVELDEPACDRLEAAADGLAALGVELERFGPGAVMVRATPAMLGAIDCHRLVTDIADDLAGYDAALGLNERLELVAATMACHGSVRAGRTLSVAEMNALLRQMEVTPHSGQCNHGRPTWVKLAMGDVERLFGRK</sequence>
<name>MUTL_SPHAL</name>
<protein>
    <recommendedName>
        <fullName evidence="1">DNA mismatch repair protein MutL</fullName>
    </recommendedName>
</protein>
<evidence type="ECO:0000255" key="1">
    <source>
        <dbReference type="HAMAP-Rule" id="MF_00149"/>
    </source>
</evidence>
<comment type="function">
    <text evidence="1">This protein is involved in the repair of mismatches in DNA. It is required for dam-dependent methyl-directed DNA mismatch repair. May act as a 'molecular matchmaker', a protein that promotes the formation of a stable complex between two or more DNA-binding proteins in an ATP-dependent manner without itself being part of a final effector complex.</text>
</comment>
<comment type="similarity">
    <text evidence="1">Belongs to the DNA mismatch repair MutL/HexB family.</text>
</comment>
<dbReference type="EMBL" id="CP000356">
    <property type="protein sequence ID" value="ABF53339.1"/>
    <property type="molecule type" value="Genomic_DNA"/>
</dbReference>
<dbReference type="RefSeq" id="WP_011541919.1">
    <property type="nucleotide sequence ID" value="NC_008048.1"/>
</dbReference>
<dbReference type="SMR" id="Q1GSN3"/>
<dbReference type="STRING" id="317655.Sala_1626"/>
<dbReference type="KEGG" id="sal:Sala_1626"/>
<dbReference type="eggNOG" id="COG0323">
    <property type="taxonomic scope" value="Bacteria"/>
</dbReference>
<dbReference type="HOGENOM" id="CLU_004131_4_2_5"/>
<dbReference type="OrthoDB" id="9763467at2"/>
<dbReference type="Proteomes" id="UP000006578">
    <property type="component" value="Chromosome"/>
</dbReference>
<dbReference type="GO" id="GO:0032300">
    <property type="term" value="C:mismatch repair complex"/>
    <property type="evidence" value="ECO:0007669"/>
    <property type="project" value="InterPro"/>
</dbReference>
<dbReference type="GO" id="GO:0005524">
    <property type="term" value="F:ATP binding"/>
    <property type="evidence" value="ECO:0007669"/>
    <property type="project" value="InterPro"/>
</dbReference>
<dbReference type="GO" id="GO:0016887">
    <property type="term" value="F:ATP hydrolysis activity"/>
    <property type="evidence" value="ECO:0007669"/>
    <property type="project" value="InterPro"/>
</dbReference>
<dbReference type="GO" id="GO:0140664">
    <property type="term" value="F:ATP-dependent DNA damage sensor activity"/>
    <property type="evidence" value="ECO:0007669"/>
    <property type="project" value="InterPro"/>
</dbReference>
<dbReference type="GO" id="GO:0030983">
    <property type="term" value="F:mismatched DNA binding"/>
    <property type="evidence" value="ECO:0007669"/>
    <property type="project" value="InterPro"/>
</dbReference>
<dbReference type="GO" id="GO:0006298">
    <property type="term" value="P:mismatch repair"/>
    <property type="evidence" value="ECO:0007669"/>
    <property type="project" value="UniProtKB-UniRule"/>
</dbReference>
<dbReference type="CDD" id="cd16926">
    <property type="entry name" value="HATPase_MutL-MLH-PMS-like"/>
    <property type="match status" value="1"/>
</dbReference>
<dbReference type="CDD" id="cd00782">
    <property type="entry name" value="MutL_Trans"/>
    <property type="match status" value="1"/>
</dbReference>
<dbReference type="FunFam" id="3.30.565.10:FF:000003">
    <property type="entry name" value="DNA mismatch repair endonuclease MutL"/>
    <property type="match status" value="1"/>
</dbReference>
<dbReference type="Gene3D" id="3.30.230.10">
    <property type="match status" value="1"/>
</dbReference>
<dbReference type="Gene3D" id="3.30.565.10">
    <property type="entry name" value="Histidine kinase-like ATPase, C-terminal domain"/>
    <property type="match status" value="1"/>
</dbReference>
<dbReference type="Gene3D" id="3.30.1540.20">
    <property type="entry name" value="MutL, C-terminal domain, dimerisation subdomain"/>
    <property type="match status" value="1"/>
</dbReference>
<dbReference type="Gene3D" id="3.30.1370.100">
    <property type="entry name" value="MutL, C-terminal domain, regulatory subdomain"/>
    <property type="match status" value="1"/>
</dbReference>
<dbReference type="HAMAP" id="MF_00149">
    <property type="entry name" value="DNA_mis_repair"/>
    <property type="match status" value="1"/>
</dbReference>
<dbReference type="InterPro" id="IPR014762">
    <property type="entry name" value="DNA_mismatch_repair_CS"/>
</dbReference>
<dbReference type="InterPro" id="IPR020667">
    <property type="entry name" value="DNA_mismatch_repair_MutL"/>
</dbReference>
<dbReference type="InterPro" id="IPR013507">
    <property type="entry name" value="DNA_mismatch_S5_2-like"/>
</dbReference>
<dbReference type="InterPro" id="IPR036890">
    <property type="entry name" value="HATPase_C_sf"/>
</dbReference>
<dbReference type="InterPro" id="IPR002099">
    <property type="entry name" value="MutL/Mlh/PMS"/>
</dbReference>
<dbReference type="InterPro" id="IPR038973">
    <property type="entry name" value="MutL/Mlh/Pms-like"/>
</dbReference>
<dbReference type="InterPro" id="IPR014790">
    <property type="entry name" value="MutL_C"/>
</dbReference>
<dbReference type="InterPro" id="IPR042120">
    <property type="entry name" value="MutL_C_dimsub"/>
</dbReference>
<dbReference type="InterPro" id="IPR042121">
    <property type="entry name" value="MutL_C_regsub"/>
</dbReference>
<dbReference type="InterPro" id="IPR037198">
    <property type="entry name" value="MutL_C_sf"/>
</dbReference>
<dbReference type="InterPro" id="IPR020568">
    <property type="entry name" value="Ribosomal_Su5_D2-typ_SF"/>
</dbReference>
<dbReference type="InterPro" id="IPR014721">
    <property type="entry name" value="Ribsml_uS5_D2-typ_fold_subgr"/>
</dbReference>
<dbReference type="NCBIfam" id="TIGR00585">
    <property type="entry name" value="mutl"/>
    <property type="match status" value="1"/>
</dbReference>
<dbReference type="NCBIfam" id="NF000953">
    <property type="entry name" value="PRK00095.2-4"/>
    <property type="match status" value="1"/>
</dbReference>
<dbReference type="PANTHER" id="PTHR10073">
    <property type="entry name" value="DNA MISMATCH REPAIR PROTEIN MLH, PMS, MUTL"/>
    <property type="match status" value="1"/>
</dbReference>
<dbReference type="PANTHER" id="PTHR10073:SF12">
    <property type="entry name" value="DNA MISMATCH REPAIR PROTEIN MLH1"/>
    <property type="match status" value="1"/>
</dbReference>
<dbReference type="Pfam" id="PF01119">
    <property type="entry name" value="DNA_mis_repair"/>
    <property type="match status" value="1"/>
</dbReference>
<dbReference type="Pfam" id="PF13589">
    <property type="entry name" value="HATPase_c_3"/>
    <property type="match status" value="1"/>
</dbReference>
<dbReference type="Pfam" id="PF08676">
    <property type="entry name" value="MutL_C"/>
    <property type="match status" value="1"/>
</dbReference>
<dbReference type="SMART" id="SM01340">
    <property type="entry name" value="DNA_mis_repair"/>
    <property type="match status" value="1"/>
</dbReference>
<dbReference type="SMART" id="SM00853">
    <property type="entry name" value="MutL_C"/>
    <property type="match status" value="1"/>
</dbReference>
<dbReference type="SUPFAM" id="SSF55874">
    <property type="entry name" value="ATPase domain of HSP90 chaperone/DNA topoisomerase II/histidine kinase"/>
    <property type="match status" value="1"/>
</dbReference>
<dbReference type="SUPFAM" id="SSF118116">
    <property type="entry name" value="DNA mismatch repair protein MutL"/>
    <property type="match status" value="1"/>
</dbReference>
<dbReference type="SUPFAM" id="SSF54211">
    <property type="entry name" value="Ribosomal protein S5 domain 2-like"/>
    <property type="match status" value="1"/>
</dbReference>
<dbReference type="PROSITE" id="PS00058">
    <property type="entry name" value="DNA_MISMATCH_REPAIR_1"/>
    <property type="match status" value="1"/>
</dbReference>
<keyword id="KW-0227">DNA damage</keyword>
<keyword id="KW-0234">DNA repair</keyword>
<keyword id="KW-1185">Reference proteome</keyword>
<feature type="chain" id="PRO_1000010082" description="DNA mismatch repair protein MutL">
    <location>
        <begin position="1"/>
        <end position="603"/>
    </location>
</feature>
<gene>
    <name evidence="1" type="primary">mutL</name>
    <name type="ordered locus">Sala_1626</name>
</gene>
<accession>Q1GSN3</accession>
<organism>
    <name type="scientific">Sphingopyxis alaskensis (strain DSM 13593 / LMG 18877 / RB2256)</name>
    <name type="common">Sphingomonas alaskensis</name>
    <dbReference type="NCBI Taxonomy" id="317655"/>
    <lineage>
        <taxon>Bacteria</taxon>
        <taxon>Pseudomonadati</taxon>
        <taxon>Pseudomonadota</taxon>
        <taxon>Alphaproteobacteria</taxon>
        <taxon>Sphingomonadales</taxon>
        <taxon>Sphingomonadaceae</taxon>
        <taxon>Sphingopyxis</taxon>
    </lineage>
</organism>
<reference key="1">
    <citation type="journal article" date="2009" name="Proc. Natl. Acad. Sci. U.S.A.">
        <title>The genomic basis of trophic strategy in marine bacteria.</title>
        <authorList>
            <person name="Lauro F.M."/>
            <person name="McDougald D."/>
            <person name="Thomas T."/>
            <person name="Williams T.J."/>
            <person name="Egan S."/>
            <person name="Rice S."/>
            <person name="DeMaere M.Z."/>
            <person name="Ting L."/>
            <person name="Ertan H."/>
            <person name="Johnson J."/>
            <person name="Ferriera S."/>
            <person name="Lapidus A."/>
            <person name="Anderson I."/>
            <person name="Kyrpides N."/>
            <person name="Munk A.C."/>
            <person name="Detter C."/>
            <person name="Han C.S."/>
            <person name="Brown M.V."/>
            <person name="Robb F.T."/>
            <person name="Kjelleberg S."/>
            <person name="Cavicchioli R."/>
        </authorList>
    </citation>
    <scope>NUCLEOTIDE SEQUENCE [LARGE SCALE GENOMIC DNA]</scope>
    <source>
        <strain>DSM 13593 / LMG 18877 / RB2256</strain>
    </source>
</reference>
<proteinExistence type="inferred from homology"/>